<keyword id="KW-0002">3D-structure</keyword>
<keyword id="KW-0963">Cytoplasm</keyword>
<keyword id="KW-0488">Methylation</keyword>
<keyword id="KW-0597">Phosphoprotein</keyword>
<keyword id="KW-0648">Protein biosynthesis</keyword>
<keyword id="KW-1185">Reference proteome</keyword>
<organism>
    <name type="scientific">Schizosaccharomyces pombe (strain 972 / ATCC 24843)</name>
    <name type="common">Fission yeast</name>
    <dbReference type="NCBI Taxonomy" id="284812"/>
    <lineage>
        <taxon>Eukaryota</taxon>
        <taxon>Fungi</taxon>
        <taxon>Dikarya</taxon>
        <taxon>Ascomycota</taxon>
        <taxon>Taphrinomycotina</taxon>
        <taxon>Schizosaccharomycetes</taxon>
        <taxon>Schizosaccharomycetales</taxon>
        <taxon>Schizosaccharomycetaceae</taxon>
        <taxon>Schizosaccharomyces</taxon>
    </lineage>
</organism>
<proteinExistence type="evidence at protein level"/>
<name>ERF1_SCHPO</name>
<sequence>MSETAEKAIEIWKIRRLVKQLINCHGNGTSMITLIIPPGEQISRYSNMLAEEYGTASNIKSRVNRLSVLSAITSTRERLKLYNKVPDNGLVIYCGEVIMEGNKTRKLNIDFEPFKPINTSQYLCDNKFHTEALAELLESDQRFGFIVMDGHQTLYGVVSGSAREVLQRFTVDLPKKHGRGGQSALRFARLRDEKRHNYVRKVAEGAVQHFITDDKPNVAGIVLAGSADFKTELGQSDLFDQRLQSRIIKTVDVSYGGDAGFNQAIELAADTLSNVKYVQEKKLIQRFFDEISLDSGKYCFGVVDTMNALQEGAVETLLCFADLDMIRYEFKNSEGNPVITYMTKEQEEKDSTNSFLLDKDTGAEMELVSSMLLSEWLAEHYKDYGANLEFVSDRSQEGMQFVKGFGGIGAVMRYQLDLSMLDPESDEFYSDSD</sequence>
<gene>
    <name type="primary">sup45</name>
    <name type="ORF">SPAC1834.01</name>
</gene>
<protein>
    <recommendedName>
        <fullName>Eukaryotic peptide chain release factor subunit 1</fullName>
        <shortName>Eukaryotic release factor 1</shortName>
        <shortName>eRF1</shortName>
    </recommendedName>
</protein>
<accession>P79063</accession>
<feature type="chain" id="PRO_0000143166" description="Eukaryotic peptide chain release factor subunit 1">
    <location>
        <begin position="1"/>
        <end position="433"/>
    </location>
</feature>
<feature type="modified residue" description="N5-methylglutamine" evidence="1">
    <location>
        <position position="182"/>
    </location>
</feature>
<feature type="modified residue" description="Phosphoserine" evidence="2">
    <location>
        <position position="425"/>
    </location>
</feature>
<feature type="mutagenesis site" description="Reduced interaction with sup35/eRF3." evidence="3">
    <original>R</original>
    <variation>A</variation>
    <location>
        <position position="189"/>
    </location>
</feature>
<feature type="mutagenesis site" description="Reduced interaction with sup35/eRF3." evidence="3">
    <original>R</original>
    <variation>A</variation>
    <location>
        <position position="200"/>
    </location>
</feature>
<feature type="mutagenesis site" description="Reduced interaction with sup35/eRF3." evidence="3">
    <original>F</original>
    <variation>A</variation>
    <location>
        <position position="288"/>
    </location>
</feature>
<feature type="mutagenesis site" description="Reduced interaction with sup35/eRF3." evidence="3">
    <original>I</original>
    <variation>A</variation>
    <location>
        <position position="291"/>
    </location>
</feature>
<feature type="mutagenesis site" description="Does not affect interaction with sup35/eRF3." evidence="3">
    <original>S</original>
    <variation>A</variation>
    <location>
        <position position="292"/>
    </location>
</feature>
<feature type="mutagenesis site" description="Slightly reduced interaction with sup35/eRF3." evidence="3">
    <original>Y</original>
    <variation>A</variation>
    <location>
        <position position="298"/>
    </location>
</feature>
<feature type="mutagenesis site" description="Does not affect interaction with sup35/eRF3." evidence="3">
    <original>F</original>
    <variation>A</variation>
    <location>
        <position position="300"/>
    </location>
</feature>
<feature type="mutagenesis site" description="Reduced interaction with sup35/eRF3." evidence="3">
    <original>Q</original>
    <variation>A</variation>
    <location>
        <position position="400"/>
    </location>
</feature>
<feature type="mutagenesis site" description="Reduced interaction with sup35/eRF3." evidence="3">
    <original>F</original>
    <variation>A</variation>
    <location>
        <position position="405"/>
    </location>
</feature>
<feature type="helix" evidence="6">
    <location>
        <begin position="5"/>
        <end position="21"/>
    </location>
</feature>
<feature type="strand" evidence="6">
    <location>
        <begin position="27"/>
        <end position="29"/>
    </location>
</feature>
<feature type="strand" evidence="6">
    <location>
        <begin position="31"/>
        <end position="35"/>
    </location>
</feature>
<feature type="helix" evidence="6">
    <location>
        <begin position="42"/>
        <end position="55"/>
    </location>
</feature>
<feature type="helix" evidence="6">
    <location>
        <begin position="62"/>
        <end position="79"/>
    </location>
</feature>
<feature type="strand" evidence="6">
    <location>
        <begin position="91"/>
        <end position="97"/>
    </location>
</feature>
<feature type="helix" evidence="6">
    <location>
        <begin position="100"/>
        <end position="102"/>
    </location>
</feature>
<feature type="strand" evidence="6">
    <location>
        <begin position="105"/>
        <end position="111"/>
    </location>
</feature>
<feature type="strand" evidence="6">
    <location>
        <begin position="121"/>
        <end position="127"/>
    </location>
</feature>
<feature type="helix" evidence="6">
    <location>
        <begin position="133"/>
        <end position="136"/>
    </location>
</feature>
<feature type="helix" evidence="6">
    <location>
        <begin position="275"/>
        <end position="292"/>
    </location>
</feature>
<feature type="helix" evidence="6">
    <location>
        <begin position="302"/>
        <end position="310"/>
    </location>
</feature>
<feature type="strand" evidence="6">
    <location>
        <begin position="315"/>
        <end position="320"/>
    </location>
</feature>
<feature type="turn" evidence="6">
    <location>
        <begin position="346"/>
        <end position="348"/>
    </location>
</feature>
<feature type="helix" evidence="6">
    <location>
        <begin position="373"/>
        <end position="380"/>
    </location>
</feature>
<feature type="helix" evidence="6">
    <location>
        <begin position="381"/>
        <end position="384"/>
    </location>
</feature>
<feature type="strand" evidence="6">
    <location>
        <begin position="388"/>
        <end position="391"/>
    </location>
</feature>
<feature type="helix" evidence="6">
    <location>
        <begin position="396"/>
        <end position="403"/>
    </location>
</feature>
<feature type="strand" evidence="6">
    <location>
        <begin position="408"/>
        <end position="411"/>
    </location>
</feature>
<evidence type="ECO:0000250" key="1"/>
<evidence type="ECO:0000269" key="2">
    <source>
    </source>
</evidence>
<evidence type="ECO:0000269" key="3">
    <source>
    </source>
</evidence>
<evidence type="ECO:0000305" key="4"/>
<evidence type="ECO:0007744" key="5">
    <source>
        <dbReference type="PDB" id="3E20"/>
    </source>
</evidence>
<evidence type="ECO:0007829" key="6">
    <source>
        <dbReference type="PDB" id="3E20"/>
    </source>
</evidence>
<dbReference type="EMBL" id="D63883">
    <property type="protein sequence ID" value="BAA09933.1"/>
    <property type="molecule type" value="Genomic_DNA"/>
</dbReference>
<dbReference type="EMBL" id="CU329670">
    <property type="protein sequence ID" value="CAB75769.1"/>
    <property type="molecule type" value="Genomic_DNA"/>
</dbReference>
<dbReference type="PIR" id="T43243">
    <property type="entry name" value="T43243"/>
</dbReference>
<dbReference type="RefSeq" id="NP_594680.1">
    <property type="nucleotide sequence ID" value="NM_001020109.2"/>
</dbReference>
<dbReference type="PDB" id="3E20">
    <property type="method" value="X-ray"/>
    <property type="resolution" value="3.50 A"/>
    <property type="chains" value="B/C/H/K=1-433"/>
</dbReference>
<dbReference type="PDBsum" id="3E20"/>
<dbReference type="SMR" id="P79063"/>
<dbReference type="BioGRID" id="278624">
    <property type="interactions" value="4"/>
</dbReference>
<dbReference type="ComplexPortal" id="CPX-2722">
    <property type="entry name" value="ERF1-ERF3 translation termination complex"/>
</dbReference>
<dbReference type="DIP" id="DIP-59470N"/>
<dbReference type="FunCoup" id="P79063">
    <property type="interactions" value="914"/>
</dbReference>
<dbReference type="IntAct" id="P79063">
    <property type="interactions" value="1"/>
</dbReference>
<dbReference type="STRING" id="284812.P79063"/>
<dbReference type="iPTMnet" id="P79063"/>
<dbReference type="PaxDb" id="4896-SPAC1834.01.1"/>
<dbReference type="EnsemblFungi" id="SPAC1834.01.1">
    <property type="protein sequence ID" value="SPAC1834.01.1:pep"/>
    <property type="gene ID" value="SPAC1834.01"/>
</dbReference>
<dbReference type="GeneID" id="2542148"/>
<dbReference type="KEGG" id="spo:2542148"/>
<dbReference type="PomBase" id="SPAC1834.01">
    <property type="gene designation" value="sup45"/>
</dbReference>
<dbReference type="VEuPathDB" id="FungiDB:SPAC1834.01"/>
<dbReference type="eggNOG" id="KOG0688">
    <property type="taxonomic scope" value="Eukaryota"/>
</dbReference>
<dbReference type="HOGENOM" id="CLU_035759_2_1_1"/>
<dbReference type="InParanoid" id="P79063"/>
<dbReference type="OMA" id="GPGTEKM"/>
<dbReference type="PhylomeDB" id="P79063"/>
<dbReference type="Reactome" id="R-SPO-72764">
    <property type="pathway name" value="Eukaryotic Translation Termination"/>
</dbReference>
<dbReference type="Reactome" id="R-SPO-9629569">
    <property type="pathway name" value="Protein hydroxylation"/>
</dbReference>
<dbReference type="Reactome" id="R-SPO-975956">
    <property type="pathway name" value="Nonsense Mediated Decay (NMD) independent of the Exon Junction Complex (EJC)"/>
</dbReference>
<dbReference type="Reactome" id="R-SPO-975957">
    <property type="pathway name" value="Nonsense Mediated Decay (NMD) enhanced by the Exon Junction Complex (EJC)"/>
</dbReference>
<dbReference type="EvolutionaryTrace" id="P79063"/>
<dbReference type="PRO" id="PR:P79063"/>
<dbReference type="Proteomes" id="UP000002485">
    <property type="component" value="Chromosome I"/>
</dbReference>
<dbReference type="GO" id="GO:0005829">
    <property type="term" value="C:cytosol"/>
    <property type="evidence" value="ECO:0007005"/>
    <property type="project" value="PomBase"/>
</dbReference>
<dbReference type="GO" id="GO:0018444">
    <property type="term" value="C:translation release factor complex"/>
    <property type="evidence" value="ECO:0000314"/>
    <property type="project" value="PomBase"/>
</dbReference>
<dbReference type="GO" id="GO:0030695">
    <property type="term" value="F:GTPase regulator activity"/>
    <property type="evidence" value="ECO:0000314"/>
    <property type="project" value="PomBase"/>
</dbReference>
<dbReference type="GO" id="GO:1990825">
    <property type="term" value="F:sequence-specific mRNA binding"/>
    <property type="evidence" value="ECO:0000269"/>
    <property type="project" value="PomBase"/>
</dbReference>
<dbReference type="GO" id="GO:0016149">
    <property type="term" value="F:translation release factor activity, codon specific"/>
    <property type="evidence" value="ECO:0000318"/>
    <property type="project" value="GO_Central"/>
</dbReference>
<dbReference type="GO" id="GO:0002184">
    <property type="term" value="P:cytoplasmic translational termination"/>
    <property type="evidence" value="ECO:0000353"/>
    <property type="project" value="PomBase"/>
</dbReference>
<dbReference type="FunFam" id="3.30.420.60:FF:000001">
    <property type="entry name" value="Eukaryotic peptide chain release factor subunit 1"/>
    <property type="match status" value="1"/>
</dbReference>
<dbReference type="FunFam" id="3.30.960.10:FF:000002">
    <property type="entry name" value="Eukaryotic peptide chain release factor subunit 1"/>
    <property type="match status" value="1"/>
</dbReference>
<dbReference type="FunFam" id="3.30.1330.30:FF:000006">
    <property type="entry name" value="Peptide chain release factor subunit 1"/>
    <property type="match status" value="1"/>
</dbReference>
<dbReference type="Gene3D" id="3.30.1330.30">
    <property type="match status" value="1"/>
</dbReference>
<dbReference type="Gene3D" id="3.30.960.10">
    <property type="entry name" value="eRF1 domain 1"/>
    <property type="match status" value="1"/>
</dbReference>
<dbReference type="Gene3D" id="3.30.420.60">
    <property type="entry name" value="eRF1 domain 2"/>
    <property type="match status" value="1"/>
</dbReference>
<dbReference type="InterPro" id="IPR042226">
    <property type="entry name" value="eFR1_2_sf"/>
</dbReference>
<dbReference type="InterPro" id="IPR005140">
    <property type="entry name" value="eRF1_1_Pelota"/>
</dbReference>
<dbReference type="InterPro" id="IPR024049">
    <property type="entry name" value="eRF1_1_sf"/>
</dbReference>
<dbReference type="InterPro" id="IPR005141">
    <property type="entry name" value="eRF1_2"/>
</dbReference>
<dbReference type="InterPro" id="IPR005142">
    <property type="entry name" value="eRF1_3"/>
</dbReference>
<dbReference type="InterPro" id="IPR004403">
    <property type="entry name" value="Peptide_chain-rel_eRF1/aRF1"/>
</dbReference>
<dbReference type="InterPro" id="IPR029064">
    <property type="entry name" value="Ribosomal_eL30-like_sf"/>
</dbReference>
<dbReference type="NCBIfam" id="TIGR03676">
    <property type="entry name" value="aRF1_eRF1"/>
    <property type="match status" value="1"/>
</dbReference>
<dbReference type="PANTHER" id="PTHR10113">
    <property type="entry name" value="PEPTIDE CHAIN RELEASE FACTOR SUBUNIT 1"/>
    <property type="match status" value="1"/>
</dbReference>
<dbReference type="Pfam" id="PF03463">
    <property type="entry name" value="eRF1_1"/>
    <property type="match status" value="1"/>
</dbReference>
<dbReference type="Pfam" id="PF03464">
    <property type="entry name" value="eRF1_2"/>
    <property type="match status" value="1"/>
</dbReference>
<dbReference type="Pfam" id="PF03465">
    <property type="entry name" value="eRF1_3"/>
    <property type="match status" value="1"/>
</dbReference>
<dbReference type="SMART" id="SM01194">
    <property type="entry name" value="eRF1_1"/>
    <property type="match status" value="1"/>
</dbReference>
<dbReference type="SUPFAM" id="SSF55315">
    <property type="entry name" value="L30e-like"/>
    <property type="match status" value="1"/>
</dbReference>
<dbReference type="SUPFAM" id="SSF55481">
    <property type="entry name" value="N-terminal domain of eukaryotic peptide chain release factor subunit 1, ERF1"/>
    <property type="match status" value="1"/>
</dbReference>
<dbReference type="SUPFAM" id="SSF53137">
    <property type="entry name" value="Translational machinery components"/>
    <property type="match status" value="1"/>
</dbReference>
<comment type="function">
    <text evidence="3">Component of the eRF1-eRF3-GTP ternary complex, a ternary complex that mediates translation termination in response to the termination codons (PubMed:19417105). The eRF1-eRF3-GTP complex binds to a stop codon in the ribosomal A-site (PubMed:19417105). Sup45/eRF1 is responsible for stop codon recognition and inducing hydrolysis of peptidyl-tRNA (PubMed:19417105). Following GTP hydrolysis by sup35/eRF3, sup35/eRF3 dissociates, permitting sup45/eRF1 to accommodate fully in the A-site (PubMed:19417105).</text>
</comment>
<comment type="subunit">
    <text evidence="3">Component of the eRF1-eRF3-GTP ternary complex, composed of sup45/eRF1, sup35/eRF3 and GTP.</text>
</comment>
<comment type="subcellular location">
    <subcellularLocation>
        <location>Cytoplasm</location>
    </subcellularLocation>
</comment>
<comment type="similarity">
    <text evidence="4">Belongs to the eukaryotic release factor 1 family.</text>
</comment>
<reference key="1">
    <citation type="journal article" date="1996" name="Proc. Natl. Acad. Sci. U.S.A.">
        <title>Conserved motifs in prokaryotic and eukaryotic polypeptide release factors: tRNA-protein mimicry hypothesis.</title>
        <authorList>
            <person name="Ito K."/>
            <person name="Ebihara K."/>
            <person name="Uno M."/>
            <person name="Nakamura Y."/>
        </authorList>
    </citation>
    <scope>NUCLEOTIDE SEQUENCE [GENOMIC DNA]</scope>
    <source>
        <strain>JY333</strain>
    </source>
</reference>
<reference key="2">
    <citation type="journal article" date="2002" name="Nature">
        <title>The genome sequence of Schizosaccharomyces pombe.</title>
        <authorList>
            <person name="Wood V."/>
            <person name="Gwilliam R."/>
            <person name="Rajandream M.A."/>
            <person name="Lyne M.H."/>
            <person name="Lyne R."/>
            <person name="Stewart A."/>
            <person name="Sgouros J.G."/>
            <person name="Peat N."/>
            <person name="Hayles J."/>
            <person name="Baker S.G."/>
            <person name="Basham D."/>
            <person name="Bowman S."/>
            <person name="Brooks K."/>
            <person name="Brown D."/>
            <person name="Brown S."/>
            <person name="Chillingworth T."/>
            <person name="Churcher C.M."/>
            <person name="Collins M."/>
            <person name="Connor R."/>
            <person name="Cronin A."/>
            <person name="Davis P."/>
            <person name="Feltwell T."/>
            <person name="Fraser A."/>
            <person name="Gentles S."/>
            <person name="Goble A."/>
            <person name="Hamlin N."/>
            <person name="Harris D.E."/>
            <person name="Hidalgo J."/>
            <person name="Hodgson G."/>
            <person name="Holroyd S."/>
            <person name="Hornsby T."/>
            <person name="Howarth S."/>
            <person name="Huckle E.J."/>
            <person name="Hunt S."/>
            <person name="Jagels K."/>
            <person name="James K.D."/>
            <person name="Jones L."/>
            <person name="Jones M."/>
            <person name="Leather S."/>
            <person name="McDonald S."/>
            <person name="McLean J."/>
            <person name="Mooney P."/>
            <person name="Moule S."/>
            <person name="Mungall K.L."/>
            <person name="Murphy L.D."/>
            <person name="Niblett D."/>
            <person name="Odell C."/>
            <person name="Oliver K."/>
            <person name="O'Neil S."/>
            <person name="Pearson D."/>
            <person name="Quail M.A."/>
            <person name="Rabbinowitsch E."/>
            <person name="Rutherford K.M."/>
            <person name="Rutter S."/>
            <person name="Saunders D."/>
            <person name="Seeger K."/>
            <person name="Sharp S."/>
            <person name="Skelton J."/>
            <person name="Simmonds M.N."/>
            <person name="Squares R."/>
            <person name="Squares S."/>
            <person name="Stevens K."/>
            <person name="Taylor K."/>
            <person name="Taylor R.G."/>
            <person name="Tivey A."/>
            <person name="Walsh S.V."/>
            <person name="Warren T."/>
            <person name="Whitehead S."/>
            <person name="Woodward J.R."/>
            <person name="Volckaert G."/>
            <person name="Aert R."/>
            <person name="Robben J."/>
            <person name="Grymonprez B."/>
            <person name="Weltjens I."/>
            <person name="Vanstreels E."/>
            <person name="Rieger M."/>
            <person name="Schaefer M."/>
            <person name="Mueller-Auer S."/>
            <person name="Gabel C."/>
            <person name="Fuchs M."/>
            <person name="Duesterhoeft A."/>
            <person name="Fritzc C."/>
            <person name="Holzer E."/>
            <person name="Moestl D."/>
            <person name="Hilbert H."/>
            <person name="Borzym K."/>
            <person name="Langer I."/>
            <person name="Beck A."/>
            <person name="Lehrach H."/>
            <person name="Reinhardt R."/>
            <person name="Pohl T.M."/>
            <person name="Eger P."/>
            <person name="Zimmermann W."/>
            <person name="Wedler H."/>
            <person name="Wambutt R."/>
            <person name="Purnelle B."/>
            <person name="Goffeau A."/>
            <person name="Cadieu E."/>
            <person name="Dreano S."/>
            <person name="Gloux S."/>
            <person name="Lelaure V."/>
            <person name="Mottier S."/>
            <person name="Galibert F."/>
            <person name="Aves S.J."/>
            <person name="Xiang Z."/>
            <person name="Hunt C."/>
            <person name="Moore K."/>
            <person name="Hurst S.M."/>
            <person name="Lucas M."/>
            <person name="Rochet M."/>
            <person name="Gaillardin C."/>
            <person name="Tallada V.A."/>
            <person name="Garzon A."/>
            <person name="Thode G."/>
            <person name="Daga R.R."/>
            <person name="Cruzado L."/>
            <person name="Jimenez J."/>
            <person name="Sanchez M."/>
            <person name="del Rey F."/>
            <person name="Benito J."/>
            <person name="Dominguez A."/>
            <person name="Revuelta J.L."/>
            <person name="Moreno S."/>
            <person name="Armstrong J."/>
            <person name="Forsburg S.L."/>
            <person name="Cerutti L."/>
            <person name="Lowe T."/>
            <person name="McCombie W.R."/>
            <person name="Paulsen I."/>
            <person name="Potashkin J."/>
            <person name="Shpakovski G.V."/>
            <person name="Ussery D."/>
            <person name="Barrell B.G."/>
            <person name="Nurse P."/>
        </authorList>
    </citation>
    <scope>NUCLEOTIDE SEQUENCE [LARGE SCALE GENOMIC DNA]</scope>
    <source>
        <strain>972 / ATCC 24843</strain>
    </source>
</reference>
<reference key="3">
    <citation type="journal article" date="2008" name="J. Proteome Res.">
        <title>Phosphoproteome analysis of fission yeast.</title>
        <authorList>
            <person name="Wilson-Grady J.T."/>
            <person name="Villen J."/>
            <person name="Gygi S.P."/>
        </authorList>
    </citation>
    <scope>PHOSPHORYLATION [LARGE SCALE ANALYSIS] AT SER-425</scope>
    <scope>IDENTIFICATION BY MASS SPECTROMETRY</scope>
</reference>
<reference evidence="5" key="4">
    <citation type="journal article" date="2009" name="Genes Dev.">
        <title>Structural insights into eRF3 and stop codon recognition by eRF1.</title>
        <authorList>
            <person name="Cheng Z."/>
            <person name="Saito K."/>
            <person name="Pisarev A.V."/>
            <person name="Wada M."/>
            <person name="Pisareva V.P."/>
            <person name="Pestova T.V."/>
            <person name="Gajda M."/>
            <person name="Round A."/>
            <person name="Kong C."/>
            <person name="Lim M."/>
            <person name="Nakamura Y."/>
            <person name="Svergun D.I."/>
            <person name="Ito K."/>
            <person name="Song H."/>
        </authorList>
    </citation>
    <scope>X-RAY CRYSTALLOGRAPHY (3.50 ANGSTROMS) IN COMPLEX WITH SUP35</scope>
    <scope>FUNCTION</scope>
    <scope>IDENTIFICATION IN THE ERF1-ERF3-GTP TERNARY COMPLEX</scope>
    <scope>MUTAGENESIS OF ARG-189; ARG-200; PHE-288; ILE-291; SER-292; TYR-298; PHE-300; GLN-400 AND PHE-405</scope>
</reference>